<evidence type="ECO:0000255" key="1">
    <source>
        <dbReference type="HAMAP-Rule" id="MF_00500"/>
    </source>
</evidence>
<evidence type="ECO:0000256" key="2">
    <source>
        <dbReference type="SAM" id="MobiDB-lite"/>
    </source>
</evidence>
<evidence type="ECO:0000305" key="3"/>
<proteinExistence type="inferred from homology"/>
<gene>
    <name evidence="1" type="primary">rpsT</name>
    <name type="ordered locus">Oter_0646</name>
</gene>
<sequence length="86" mass="9121">MANTKSAIKAARKSLRLHDRNQGVKTRLKTLHKKLETAVKSGDAASSKAAAVAYTSAVDKAVKSGVVHRNVAARAKSHVAKIVFAK</sequence>
<keyword id="KW-1185">Reference proteome</keyword>
<keyword id="KW-0687">Ribonucleoprotein</keyword>
<keyword id="KW-0689">Ribosomal protein</keyword>
<keyword id="KW-0694">RNA-binding</keyword>
<keyword id="KW-0699">rRNA-binding</keyword>
<dbReference type="EMBL" id="CP001032">
    <property type="protein sequence ID" value="ACB73936.1"/>
    <property type="molecule type" value="Genomic_DNA"/>
</dbReference>
<dbReference type="RefSeq" id="WP_012373474.1">
    <property type="nucleotide sequence ID" value="NC_010571.1"/>
</dbReference>
<dbReference type="SMR" id="B1ZTJ1"/>
<dbReference type="STRING" id="452637.Oter_0646"/>
<dbReference type="KEGG" id="ote:Oter_0646"/>
<dbReference type="eggNOG" id="COG0268">
    <property type="taxonomic scope" value="Bacteria"/>
</dbReference>
<dbReference type="HOGENOM" id="CLU_160655_3_1_0"/>
<dbReference type="OrthoDB" id="9810294at2"/>
<dbReference type="Proteomes" id="UP000007013">
    <property type="component" value="Chromosome"/>
</dbReference>
<dbReference type="GO" id="GO:0015935">
    <property type="term" value="C:small ribosomal subunit"/>
    <property type="evidence" value="ECO:0007669"/>
    <property type="project" value="TreeGrafter"/>
</dbReference>
<dbReference type="GO" id="GO:0070181">
    <property type="term" value="F:small ribosomal subunit rRNA binding"/>
    <property type="evidence" value="ECO:0007669"/>
    <property type="project" value="TreeGrafter"/>
</dbReference>
<dbReference type="GO" id="GO:0003735">
    <property type="term" value="F:structural constituent of ribosome"/>
    <property type="evidence" value="ECO:0007669"/>
    <property type="project" value="InterPro"/>
</dbReference>
<dbReference type="GO" id="GO:0006412">
    <property type="term" value="P:translation"/>
    <property type="evidence" value="ECO:0007669"/>
    <property type="project" value="UniProtKB-UniRule"/>
</dbReference>
<dbReference type="Gene3D" id="1.20.58.110">
    <property type="entry name" value="Ribosomal protein S20"/>
    <property type="match status" value="1"/>
</dbReference>
<dbReference type="HAMAP" id="MF_00500">
    <property type="entry name" value="Ribosomal_bS20"/>
    <property type="match status" value="1"/>
</dbReference>
<dbReference type="InterPro" id="IPR002583">
    <property type="entry name" value="Ribosomal_bS20"/>
</dbReference>
<dbReference type="InterPro" id="IPR036510">
    <property type="entry name" value="Ribosomal_bS20_sf"/>
</dbReference>
<dbReference type="NCBIfam" id="TIGR00029">
    <property type="entry name" value="S20"/>
    <property type="match status" value="1"/>
</dbReference>
<dbReference type="PANTHER" id="PTHR33398">
    <property type="entry name" value="30S RIBOSOMAL PROTEIN S20"/>
    <property type="match status" value="1"/>
</dbReference>
<dbReference type="PANTHER" id="PTHR33398:SF1">
    <property type="entry name" value="SMALL RIBOSOMAL SUBUNIT PROTEIN BS20C"/>
    <property type="match status" value="1"/>
</dbReference>
<dbReference type="Pfam" id="PF01649">
    <property type="entry name" value="Ribosomal_S20p"/>
    <property type="match status" value="1"/>
</dbReference>
<dbReference type="SUPFAM" id="SSF46992">
    <property type="entry name" value="Ribosomal protein S20"/>
    <property type="match status" value="1"/>
</dbReference>
<feature type="chain" id="PRO_1000126487" description="Small ribosomal subunit protein bS20">
    <location>
        <begin position="1"/>
        <end position="86"/>
    </location>
</feature>
<feature type="region of interest" description="Disordered" evidence="2">
    <location>
        <begin position="1"/>
        <end position="21"/>
    </location>
</feature>
<accession>B1ZTJ1</accession>
<reference key="1">
    <citation type="journal article" date="2011" name="J. Bacteriol.">
        <title>Genome sequence of the verrucomicrobium Opitutus terrae PB90-1, an abundant inhabitant of rice paddy soil ecosystems.</title>
        <authorList>
            <person name="van Passel M.W."/>
            <person name="Kant R."/>
            <person name="Palva A."/>
            <person name="Copeland A."/>
            <person name="Lucas S."/>
            <person name="Lapidus A."/>
            <person name="Glavina del Rio T."/>
            <person name="Pitluck S."/>
            <person name="Goltsman E."/>
            <person name="Clum A."/>
            <person name="Sun H."/>
            <person name="Schmutz J."/>
            <person name="Larimer F.W."/>
            <person name="Land M.L."/>
            <person name="Hauser L."/>
            <person name="Kyrpides N."/>
            <person name="Mikhailova N."/>
            <person name="Richardson P.P."/>
            <person name="Janssen P.H."/>
            <person name="de Vos W.M."/>
            <person name="Smidt H."/>
        </authorList>
    </citation>
    <scope>NUCLEOTIDE SEQUENCE [LARGE SCALE GENOMIC DNA]</scope>
    <source>
        <strain>DSM 11246 / JCM 15787 / PB90-1</strain>
    </source>
</reference>
<protein>
    <recommendedName>
        <fullName evidence="1">Small ribosomal subunit protein bS20</fullName>
    </recommendedName>
    <alternativeName>
        <fullName evidence="3">30S ribosomal protein S20</fullName>
    </alternativeName>
</protein>
<name>RS20_OPITP</name>
<organism>
    <name type="scientific">Opitutus terrae (strain DSM 11246 / JCM 15787 / PB90-1)</name>
    <dbReference type="NCBI Taxonomy" id="452637"/>
    <lineage>
        <taxon>Bacteria</taxon>
        <taxon>Pseudomonadati</taxon>
        <taxon>Verrucomicrobiota</taxon>
        <taxon>Opitutia</taxon>
        <taxon>Opitutales</taxon>
        <taxon>Opitutaceae</taxon>
        <taxon>Opitutus</taxon>
    </lineage>
</organism>
<comment type="function">
    <text evidence="1">Binds directly to 16S ribosomal RNA.</text>
</comment>
<comment type="similarity">
    <text evidence="1">Belongs to the bacterial ribosomal protein bS20 family.</text>
</comment>